<evidence type="ECO:0000250" key="1">
    <source>
        <dbReference type="UniProtKB" id="P00410"/>
    </source>
</evidence>
<evidence type="ECO:0000255" key="2"/>
<evidence type="ECO:0000305" key="3"/>
<protein>
    <recommendedName>
        <fullName>Cytochrome c oxidase subunit 2</fullName>
        <ecNumber>7.1.1.9</ecNumber>
    </recommendedName>
    <alternativeName>
        <fullName>Cytochrome c oxidase polypeptide II</fullName>
    </alternativeName>
</protein>
<keyword id="KW-0186">Copper</keyword>
<keyword id="KW-0249">Electron transport</keyword>
<keyword id="KW-0460">Magnesium</keyword>
<keyword id="KW-0472">Membrane</keyword>
<keyword id="KW-0479">Metal-binding</keyword>
<keyword id="KW-0496">Mitochondrion</keyword>
<keyword id="KW-0999">Mitochondrion inner membrane</keyword>
<keyword id="KW-0679">Respiratory chain</keyword>
<keyword id="KW-1278">Translocase</keyword>
<keyword id="KW-0812">Transmembrane</keyword>
<keyword id="KW-1133">Transmembrane helix</keyword>
<keyword id="KW-0813">Transport</keyword>
<gene>
    <name type="primary">mt:CoII</name>
    <name type="synonym">CoII</name>
</gene>
<feature type="chain" id="PRO_0000183574" description="Cytochrome c oxidase subunit 2">
    <location>
        <begin position="1"/>
        <end position="229"/>
    </location>
</feature>
<feature type="topological domain" description="Mitochondrial intermembrane" evidence="2">
    <location>
        <begin position="1"/>
        <end position="26"/>
    </location>
</feature>
<feature type="transmembrane region" description="Helical" evidence="2">
    <location>
        <begin position="27"/>
        <end position="48"/>
    </location>
</feature>
<feature type="topological domain" description="Mitochondrial matrix" evidence="2">
    <location>
        <begin position="49"/>
        <end position="62"/>
    </location>
</feature>
<feature type="transmembrane region" description="Helical" evidence="2">
    <location>
        <begin position="63"/>
        <end position="82"/>
    </location>
</feature>
<feature type="topological domain" description="Mitochondrial intermembrane" evidence="2">
    <location>
        <begin position="83"/>
        <end position="229"/>
    </location>
</feature>
<feature type="binding site" evidence="1">
    <location>
        <position position="161"/>
    </location>
    <ligand>
        <name>Cu cation</name>
        <dbReference type="ChEBI" id="CHEBI:23378"/>
        <label>A1</label>
    </ligand>
</feature>
<feature type="binding site" evidence="1">
    <location>
        <position position="196"/>
    </location>
    <ligand>
        <name>Cu cation</name>
        <dbReference type="ChEBI" id="CHEBI:23378"/>
        <label>A1</label>
    </ligand>
</feature>
<feature type="binding site" evidence="1">
    <location>
        <position position="196"/>
    </location>
    <ligand>
        <name>Cu cation</name>
        <dbReference type="ChEBI" id="CHEBI:23378"/>
        <label>A2</label>
    </ligand>
</feature>
<feature type="binding site" evidence="1">
    <location>
        <position position="198"/>
    </location>
    <ligand>
        <name>Cu cation</name>
        <dbReference type="ChEBI" id="CHEBI:23378"/>
        <label>A2</label>
    </ligand>
</feature>
<feature type="binding site" evidence="1">
    <location>
        <position position="198"/>
    </location>
    <ligand>
        <name>Mg(2+)</name>
        <dbReference type="ChEBI" id="CHEBI:18420"/>
        <note>ligand shared with subunit 1</note>
    </ligand>
</feature>
<feature type="binding site" evidence="1">
    <location>
        <position position="200"/>
    </location>
    <ligand>
        <name>Cu cation</name>
        <dbReference type="ChEBI" id="CHEBI:23378"/>
        <label>A1</label>
    </ligand>
</feature>
<feature type="binding site" evidence="1">
    <location>
        <position position="200"/>
    </location>
    <ligand>
        <name>Cu cation</name>
        <dbReference type="ChEBI" id="CHEBI:23378"/>
        <label>A2</label>
    </ligand>
</feature>
<feature type="binding site" evidence="1">
    <location>
        <position position="204"/>
    </location>
    <ligand>
        <name>Cu cation</name>
        <dbReference type="ChEBI" id="CHEBI:23378"/>
        <label>A2</label>
    </ligand>
</feature>
<feature type="binding site" evidence="1">
    <location>
        <position position="207"/>
    </location>
    <ligand>
        <name>Cu cation</name>
        <dbReference type="ChEBI" id="CHEBI:23378"/>
        <label>A1</label>
    </ligand>
</feature>
<comment type="function">
    <text evidence="1">Component of the cytochrome c oxidase, the last enzyme in the mitochondrial electron transport chain which drives oxidative phosphorylation. The respiratory chain contains 3 multisubunit complexes succinate dehydrogenase (complex II, CII), ubiquinol-cytochrome c oxidoreductase (cytochrome b-c1 complex, complex III, CIII) and cytochrome c oxidase (complex IV, CIV), that cooperate to transfer electrons derived from NADH and succinate to molecular oxygen, creating an electrochemical gradient over the inner membrane that drives transmembrane transport and the ATP synthase. Cytochrome c oxidase is the component of the respiratory chain that catalyzes the reduction of oxygen to water. Electrons originating from reduced cytochrome c in the intermembrane space (IMS) are transferred via the dinuclear copper A center (CU(A)) of subunit 2 and heme A of subunit 1 to the active site in subunit 1, a binuclear center (BNC) formed by heme A3 and copper B (CU(B)). The BNC reduces molecular oxygen to 2 water molecules using 4 electrons from cytochrome c in the IMS and 4 protons from the mitochondrial matrix.</text>
</comment>
<comment type="catalytic activity">
    <reaction evidence="1">
        <text>4 Fe(II)-[cytochrome c] + O2 + 8 H(+)(in) = 4 Fe(III)-[cytochrome c] + 2 H2O + 4 H(+)(out)</text>
        <dbReference type="Rhea" id="RHEA:11436"/>
        <dbReference type="Rhea" id="RHEA-COMP:10350"/>
        <dbReference type="Rhea" id="RHEA-COMP:14399"/>
        <dbReference type="ChEBI" id="CHEBI:15377"/>
        <dbReference type="ChEBI" id="CHEBI:15378"/>
        <dbReference type="ChEBI" id="CHEBI:15379"/>
        <dbReference type="ChEBI" id="CHEBI:29033"/>
        <dbReference type="ChEBI" id="CHEBI:29034"/>
        <dbReference type="EC" id="7.1.1.9"/>
    </reaction>
    <physiologicalReaction direction="left-to-right" evidence="1">
        <dbReference type="Rhea" id="RHEA:11437"/>
    </physiologicalReaction>
</comment>
<comment type="cofactor">
    <cofactor evidence="1">
        <name>Cu cation</name>
        <dbReference type="ChEBI" id="CHEBI:23378"/>
    </cofactor>
    <text evidence="1">Binds a dinuclear copper A center per subunit.</text>
</comment>
<comment type="subunit">
    <text evidence="1">Component of the cytochrome c oxidase (complex IV, CIV), a multisubunit enzyme composed of a catalytic core of 3 subunits and several supernumerary subunits. The complex exists as a monomer or a dimer and forms supercomplexes (SCs) in the inner mitochondrial membrane with ubiquinol-cytochrome c oxidoreductase (cytochrome b-c1 complex, complex III, CIII).</text>
</comment>
<comment type="subcellular location">
    <subcellularLocation>
        <location evidence="1">Mitochondrion inner membrane</location>
        <topology evidence="1">Multi-pass membrane protein</topology>
    </subcellularLocation>
</comment>
<comment type="similarity">
    <text evidence="3">Belongs to the cytochrome c oxidase subunit 2 family.</text>
</comment>
<proteinExistence type="inferred from homology"/>
<name>COX2_DROAM</name>
<geneLocation type="mitochondrion"/>
<accession>P29856</accession>
<accession>B2L9S6</accession>
<sequence>MSTWANLGLQDSASPLMEQLIFFHDHALLILVMITVLVGYLMFMLFFNSYVNRFLLHGQLIEMIWTILPAIILLFIAMPSLRLLYLLDEINEPSITLKSIGHQWYWSYEYSDFNNIEFDSYMIPTNELSNDGFRLLDVDNRIVLPMNSQIRILVTAADVIHSWTVPALGVKVDGTPGRLNQTNFFINRPGLFYGQCSEICGANHSFMPIVIESVPVNYFIKWISNSVNS</sequence>
<organism>
    <name type="scientific">Drosophila ambigua</name>
    <name type="common">Fruit fly</name>
    <dbReference type="NCBI Taxonomy" id="7216"/>
    <lineage>
        <taxon>Eukaryota</taxon>
        <taxon>Metazoa</taxon>
        <taxon>Ecdysozoa</taxon>
        <taxon>Arthropoda</taxon>
        <taxon>Hexapoda</taxon>
        <taxon>Insecta</taxon>
        <taxon>Pterygota</taxon>
        <taxon>Neoptera</taxon>
        <taxon>Endopterygota</taxon>
        <taxon>Diptera</taxon>
        <taxon>Brachycera</taxon>
        <taxon>Muscomorpha</taxon>
        <taxon>Ephydroidea</taxon>
        <taxon>Drosophilidae</taxon>
        <taxon>Drosophila</taxon>
        <taxon>Sophophora</taxon>
    </lineage>
</organism>
<dbReference type="EC" id="7.1.1.9"/>
<dbReference type="EMBL" id="M95145">
    <property type="protein sequence ID" value="AAA02775.2"/>
    <property type="molecule type" value="Genomic_DNA"/>
</dbReference>
<dbReference type="EMBL" id="EU493759">
    <property type="protein sequence ID" value="ACC94837.1"/>
    <property type="molecule type" value="Genomic_DNA"/>
</dbReference>
<dbReference type="SMR" id="P29856"/>
<dbReference type="GO" id="GO:0005743">
    <property type="term" value="C:mitochondrial inner membrane"/>
    <property type="evidence" value="ECO:0007669"/>
    <property type="project" value="UniProtKB-SubCell"/>
</dbReference>
<dbReference type="GO" id="GO:0005507">
    <property type="term" value="F:copper ion binding"/>
    <property type="evidence" value="ECO:0007669"/>
    <property type="project" value="InterPro"/>
</dbReference>
<dbReference type="GO" id="GO:0004129">
    <property type="term" value="F:cytochrome-c oxidase activity"/>
    <property type="evidence" value="ECO:0007669"/>
    <property type="project" value="UniProtKB-EC"/>
</dbReference>
<dbReference type="GO" id="GO:0042773">
    <property type="term" value="P:ATP synthesis coupled electron transport"/>
    <property type="evidence" value="ECO:0007669"/>
    <property type="project" value="TreeGrafter"/>
</dbReference>
<dbReference type="CDD" id="cd13912">
    <property type="entry name" value="CcO_II_C"/>
    <property type="match status" value="1"/>
</dbReference>
<dbReference type="FunFam" id="1.10.287.90:FF:000006">
    <property type="entry name" value="Cytochrome c oxidase subunit 2"/>
    <property type="match status" value="1"/>
</dbReference>
<dbReference type="FunFam" id="2.60.40.420:FF:000001">
    <property type="entry name" value="Cytochrome c oxidase subunit 2"/>
    <property type="match status" value="1"/>
</dbReference>
<dbReference type="Gene3D" id="1.10.287.90">
    <property type="match status" value="1"/>
</dbReference>
<dbReference type="Gene3D" id="2.60.40.420">
    <property type="entry name" value="Cupredoxins - blue copper proteins"/>
    <property type="match status" value="1"/>
</dbReference>
<dbReference type="InterPro" id="IPR045187">
    <property type="entry name" value="CcO_II"/>
</dbReference>
<dbReference type="InterPro" id="IPR002429">
    <property type="entry name" value="CcO_II-like_C"/>
</dbReference>
<dbReference type="InterPro" id="IPR034210">
    <property type="entry name" value="CcO_II_C"/>
</dbReference>
<dbReference type="InterPro" id="IPR001505">
    <property type="entry name" value="Copper_CuA"/>
</dbReference>
<dbReference type="InterPro" id="IPR008972">
    <property type="entry name" value="Cupredoxin"/>
</dbReference>
<dbReference type="InterPro" id="IPR014222">
    <property type="entry name" value="Cyt_c_oxidase_su2"/>
</dbReference>
<dbReference type="InterPro" id="IPR011759">
    <property type="entry name" value="Cyt_c_oxidase_su2_TM_dom"/>
</dbReference>
<dbReference type="InterPro" id="IPR036257">
    <property type="entry name" value="Cyt_c_oxidase_su2_TM_sf"/>
</dbReference>
<dbReference type="NCBIfam" id="TIGR02866">
    <property type="entry name" value="CoxB"/>
    <property type="match status" value="1"/>
</dbReference>
<dbReference type="PANTHER" id="PTHR22888:SF9">
    <property type="entry name" value="CYTOCHROME C OXIDASE SUBUNIT 2"/>
    <property type="match status" value="1"/>
</dbReference>
<dbReference type="PANTHER" id="PTHR22888">
    <property type="entry name" value="CYTOCHROME C OXIDASE, SUBUNIT II"/>
    <property type="match status" value="1"/>
</dbReference>
<dbReference type="Pfam" id="PF00116">
    <property type="entry name" value="COX2"/>
    <property type="match status" value="1"/>
</dbReference>
<dbReference type="Pfam" id="PF02790">
    <property type="entry name" value="COX2_TM"/>
    <property type="match status" value="1"/>
</dbReference>
<dbReference type="PRINTS" id="PR01166">
    <property type="entry name" value="CYCOXIDASEII"/>
</dbReference>
<dbReference type="SUPFAM" id="SSF49503">
    <property type="entry name" value="Cupredoxins"/>
    <property type="match status" value="1"/>
</dbReference>
<dbReference type="SUPFAM" id="SSF81464">
    <property type="entry name" value="Cytochrome c oxidase subunit II-like, transmembrane region"/>
    <property type="match status" value="1"/>
</dbReference>
<dbReference type="PROSITE" id="PS00078">
    <property type="entry name" value="COX2"/>
    <property type="match status" value="1"/>
</dbReference>
<dbReference type="PROSITE" id="PS50857">
    <property type="entry name" value="COX2_CUA"/>
    <property type="match status" value="1"/>
</dbReference>
<dbReference type="PROSITE" id="PS50999">
    <property type="entry name" value="COX2_TM"/>
    <property type="match status" value="1"/>
</dbReference>
<reference key="1">
    <citation type="journal article" date="1993" name="Mol. Biol. Evol.">
        <title>Relationships in the Drosophila obscura species group, inferred from mitochondrial cytochrome oxidase II sequences.</title>
        <authorList>
            <person name="Beckenbach A.T."/>
            <person name="Wei Y.W."/>
            <person name="Liu H."/>
        </authorList>
    </citation>
    <scope>NUCLEOTIDE SEQUENCE [GENOMIC DNA]</scope>
</reference>
<reference key="2">
    <citation type="journal article" date="2008" name="Biol. Lett.">
        <title>Out of Hawaii: the origin and biogeography of the genus Scaptomyza (Diptera: Drosophilidae).</title>
        <authorList>
            <person name="O'Grady P.M."/>
            <person name="DeSalle R."/>
        </authorList>
    </citation>
    <scope>NUCLEOTIDE SEQUENCE [GENOMIC DNA]</scope>
</reference>